<sequence length="265" mass="30349">MIKWPWKVQESAHQTALPWQEALSIPLLTCLTEQEQSKLVTLAERFLQQKRLLPLQGFELDSLRSCRIALLFCLPVLELGLEWLDGFHEVLIYPAPFVVDDEWEDDIGLVHNQRIVQSGQSWQQGPIVLNWLDIQDSFDASGFNLIIHEVAHKLDTRNGDRASGVPFIPLREVAGWEYDLHAAMNNIQEEIELVGENAASIDAYAASDPAECFAVLSEYFFSAPELFAPRFPSLWQRFCQFYQQDPLQRLHHANDTDSFSTTNVH</sequence>
<accession>B7NBW5</accession>
<protein>
    <recommendedName>
        <fullName evidence="1">Mlc titration factor A</fullName>
    </recommendedName>
    <alternativeName>
        <fullName evidence="1">Probable zinc metallopeptidase MtfA</fullName>
        <ecNumber evidence="1">3.4.11.-</ecNumber>
    </alternativeName>
</protein>
<evidence type="ECO:0000255" key="1">
    <source>
        <dbReference type="HAMAP-Rule" id="MF_01593"/>
    </source>
</evidence>
<reference key="1">
    <citation type="journal article" date="2009" name="PLoS Genet.">
        <title>Organised genome dynamics in the Escherichia coli species results in highly diverse adaptive paths.</title>
        <authorList>
            <person name="Touchon M."/>
            <person name="Hoede C."/>
            <person name="Tenaillon O."/>
            <person name="Barbe V."/>
            <person name="Baeriswyl S."/>
            <person name="Bidet P."/>
            <person name="Bingen E."/>
            <person name="Bonacorsi S."/>
            <person name="Bouchier C."/>
            <person name="Bouvet O."/>
            <person name="Calteau A."/>
            <person name="Chiapello H."/>
            <person name="Clermont O."/>
            <person name="Cruveiller S."/>
            <person name="Danchin A."/>
            <person name="Diard M."/>
            <person name="Dossat C."/>
            <person name="Karoui M.E."/>
            <person name="Frapy E."/>
            <person name="Garry L."/>
            <person name="Ghigo J.M."/>
            <person name="Gilles A.M."/>
            <person name="Johnson J."/>
            <person name="Le Bouguenec C."/>
            <person name="Lescat M."/>
            <person name="Mangenot S."/>
            <person name="Martinez-Jehanne V."/>
            <person name="Matic I."/>
            <person name="Nassif X."/>
            <person name="Oztas S."/>
            <person name="Petit M.A."/>
            <person name="Pichon C."/>
            <person name="Rouy Z."/>
            <person name="Ruf C.S."/>
            <person name="Schneider D."/>
            <person name="Tourret J."/>
            <person name="Vacherie B."/>
            <person name="Vallenet D."/>
            <person name="Medigue C."/>
            <person name="Rocha E.P.C."/>
            <person name="Denamur E."/>
        </authorList>
    </citation>
    <scope>NUCLEOTIDE SEQUENCE [LARGE SCALE GENOMIC DNA]</scope>
    <source>
        <strain>UMN026 / ExPEC</strain>
    </source>
</reference>
<comment type="function">
    <text evidence="1">Involved in the modulation of the activity of the glucose-phosphotransferase system (glucose-PTS). Interacts with the transcriptional repressor Mlc, preventing its interaction with DNA and leading to the modulation of expression of genes regulated by Mlc, including ptsG, which encodes the PTS system glucose-specific EIICB component.</text>
</comment>
<comment type="function">
    <text evidence="1">Shows zinc-dependent metallopeptidase activity.</text>
</comment>
<comment type="cofactor">
    <cofactor evidence="1">
        <name>Zn(2+)</name>
        <dbReference type="ChEBI" id="CHEBI:29105"/>
    </cofactor>
    <text evidence="1">Binds 1 zinc ion per subunit.</text>
</comment>
<comment type="subunit">
    <text evidence="1">Interacts with Mlc.</text>
</comment>
<comment type="subcellular location">
    <subcellularLocation>
        <location evidence="1">Cytoplasm</location>
    </subcellularLocation>
</comment>
<comment type="similarity">
    <text evidence="1">Belongs to the MtfA family.</text>
</comment>
<organism>
    <name type="scientific">Escherichia coli O17:K52:H18 (strain UMN026 / ExPEC)</name>
    <dbReference type="NCBI Taxonomy" id="585056"/>
    <lineage>
        <taxon>Bacteria</taxon>
        <taxon>Pseudomonadati</taxon>
        <taxon>Pseudomonadota</taxon>
        <taxon>Gammaproteobacteria</taxon>
        <taxon>Enterobacterales</taxon>
        <taxon>Enterobacteriaceae</taxon>
        <taxon>Escherichia</taxon>
    </lineage>
</organism>
<dbReference type="EC" id="3.4.11.-" evidence="1"/>
<dbReference type="EMBL" id="CU928163">
    <property type="protein sequence ID" value="CAR13455.1"/>
    <property type="molecule type" value="Genomic_DNA"/>
</dbReference>
<dbReference type="RefSeq" id="WP_001309567.1">
    <property type="nucleotide sequence ID" value="NC_011751.1"/>
</dbReference>
<dbReference type="RefSeq" id="YP_002412984.1">
    <property type="nucleotide sequence ID" value="NC_011751.1"/>
</dbReference>
<dbReference type="SMR" id="B7NBW5"/>
<dbReference type="STRING" id="585056.ECUMN_2266"/>
<dbReference type="MEROPS" id="M90.001"/>
<dbReference type="KEGG" id="eum:ECUMN_2266"/>
<dbReference type="PATRIC" id="fig|585056.7.peg.2453"/>
<dbReference type="HOGENOM" id="CLU_063037_2_0_6"/>
<dbReference type="Proteomes" id="UP000007097">
    <property type="component" value="Chromosome"/>
</dbReference>
<dbReference type="GO" id="GO:0005829">
    <property type="term" value="C:cytosol"/>
    <property type="evidence" value="ECO:0007669"/>
    <property type="project" value="TreeGrafter"/>
</dbReference>
<dbReference type="GO" id="GO:0004177">
    <property type="term" value="F:aminopeptidase activity"/>
    <property type="evidence" value="ECO:0007669"/>
    <property type="project" value="UniProtKB-UniRule"/>
</dbReference>
<dbReference type="GO" id="GO:0008237">
    <property type="term" value="F:metallopeptidase activity"/>
    <property type="evidence" value="ECO:0007669"/>
    <property type="project" value="UniProtKB-UniRule"/>
</dbReference>
<dbReference type="GO" id="GO:0008270">
    <property type="term" value="F:zinc ion binding"/>
    <property type="evidence" value="ECO:0007669"/>
    <property type="project" value="UniProtKB-UniRule"/>
</dbReference>
<dbReference type="GO" id="GO:0006508">
    <property type="term" value="P:proteolysis"/>
    <property type="evidence" value="ECO:0007669"/>
    <property type="project" value="UniProtKB-KW"/>
</dbReference>
<dbReference type="CDD" id="cd20169">
    <property type="entry name" value="Peptidase_M90_mtfA"/>
    <property type="match status" value="1"/>
</dbReference>
<dbReference type="FunFam" id="1.10.472.150:FF:000001">
    <property type="entry name" value="Protein MtfA"/>
    <property type="match status" value="1"/>
</dbReference>
<dbReference type="FunFam" id="3.40.390.10:FF:000012">
    <property type="entry name" value="Protein MtfA"/>
    <property type="match status" value="1"/>
</dbReference>
<dbReference type="Gene3D" id="3.40.390.10">
    <property type="entry name" value="Collagenase (Catalytic Domain)"/>
    <property type="match status" value="1"/>
</dbReference>
<dbReference type="Gene3D" id="1.10.472.150">
    <property type="entry name" value="Glucose-regulated metallo-peptidase M90, N-terminal domain"/>
    <property type="match status" value="1"/>
</dbReference>
<dbReference type="HAMAP" id="MF_01593">
    <property type="entry name" value="MtfA"/>
    <property type="match status" value="1"/>
</dbReference>
<dbReference type="InterPro" id="IPR024079">
    <property type="entry name" value="MetalloPept_cat_dom_sf"/>
</dbReference>
<dbReference type="InterPro" id="IPR057256">
    <property type="entry name" value="MtfA_enterob"/>
</dbReference>
<dbReference type="InterPro" id="IPR010384">
    <property type="entry name" value="MtfA_fam"/>
</dbReference>
<dbReference type="InterPro" id="IPR042252">
    <property type="entry name" value="MtfA_N"/>
</dbReference>
<dbReference type="NCBIfam" id="NF011939">
    <property type="entry name" value="PRK15410.1"/>
    <property type="match status" value="1"/>
</dbReference>
<dbReference type="PANTHER" id="PTHR30164">
    <property type="entry name" value="MTFA PEPTIDASE"/>
    <property type="match status" value="1"/>
</dbReference>
<dbReference type="PANTHER" id="PTHR30164:SF2">
    <property type="entry name" value="PROTEIN MTFA"/>
    <property type="match status" value="1"/>
</dbReference>
<dbReference type="Pfam" id="PF06167">
    <property type="entry name" value="Peptidase_M90"/>
    <property type="match status" value="1"/>
</dbReference>
<dbReference type="SUPFAM" id="SSF55486">
    <property type="entry name" value="Metalloproteases ('zincins'), catalytic domain"/>
    <property type="match status" value="1"/>
</dbReference>
<gene>
    <name evidence="1" type="primary">mtfA</name>
    <name type="ordered locus">ECUMN_2266</name>
</gene>
<name>MTFA_ECOLU</name>
<feature type="chain" id="PRO_1000147837" description="Mlc titration factor A">
    <location>
        <begin position="1"/>
        <end position="265"/>
    </location>
</feature>
<feature type="binding site" evidence="1">
    <location>
        <position position="111"/>
    </location>
    <ligand>
        <name>Zn(2+)</name>
        <dbReference type="ChEBI" id="CHEBI:29105"/>
    </ligand>
</feature>
<feature type="binding site" evidence="1">
    <location>
        <position position="148"/>
    </location>
    <ligand>
        <name>Zn(2+)</name>
        <dbReference type="ChEBI" id="CHEBI:29105"/>
    </ligand>
</feature>
<feature type="binding site" evidence="1">
    <location>
        <position position="152"/>
    </location>
    <ligand>
        <name>Zn(2+)</name>
        <dbReference type="ChEBI" id="CHEBI:29105"/>
    </ligand>
</feature>
<feature type="binding site" evidence="1">
    <location>
        <position position="211"/>
    </location>
    <ligand>
        <name>Zn(2+)</name>
        <dbReference type="ChEBI" id="CHEBI:29105"/>
    </ligand>
</feature>
<proteinExistence type="inferred from homology"/>
<keyword id="KW-0031">Aminopeptidase</keyword>
<keyword id="KW-0963">Cytoplasm</keyword>
<keyword id="KW-0378">Hydrolase</keyword>
<keyword id="KW-0479">Metal-binding</keyword>
<keyword id="KW-0482">Metalloprotease</keyword>
<keyword id="KW-0645">Protease</keyword>
<keyword id="KW-0862">Zinc</keyword>